<name>MPC70_YEAST</name>
<organism>
    <name type="scientific">Saccharomyces cerevisiae (strain ATCC 204508 / S288c)</name>
    <name type="common">Baker's yeast</name>
    <dbReference type="NCBI Taxonomy" id="559292"/>
    <lineage>
        <taxon>Eukaryota</taxon>
        <taxon>Fungi</taxon>
        <taxon>Dikarya</taxon>
        <taxon>Ascomycota</taxon>
        <taxon>Saccharomycotina</taxon>
        <taxon>Saccharomycetes</taxon>
        <taxon>Saccharomycetales</taxon>
        <taxon>Saccharomycetaceae</taxon>
        <taxon>Saccharomyces</taxon>
    </lineage>
</organism>
<accession>Q12411</accession>
<accession>D6W1X7</accession>
<dbReference type="EMBL" id="X83121">
    <property type="protein sequence ID" value="CAA58188.1"/>
    <property type="molecule type" value="Genomic_DNA"/>
</dbReference>
<dbReference type="EMBL" id="Z74833">
    <property type="protein sequence ID" value="CAA99103.1"/>
    <property type="molecule type" value="Genomic_DNA"/>
</dbReference>
<dbReference type="EMBL" id="BK006948">
    <property type="protein sequence ID" value="DAA10693.1"/>
    <property type="molecule type" value="Genomic_DNA"/>
</dbReference>
<dbReference type="PIR" id="S57378">
    <property type="entry name" value="S57378"/>
</dbReference>
<dbReference type="RefSeq" id="NP_014550.1">
    <property type="nucleotide sequence ID" value="NM_001183345.1"/>
</dbReference>
<dbReference type="SMR" id="Q12411"/>
<dbReference type="BioGRID" id="34311">
    <property type="interactions" value="103"/>
</dbReference>
<dbReference type="DIP" id="DIP-921N"/>
<dbReference type="FunCoup" id="Q12411">
    <property type="interactions" value="106"/>
</dbReference>
<dbReference type="IntAct" id="Q12411">
    <property type="interactions" value="19"/>
</dbReference>
<dbReference type="MINT" id="Q12411"/>
<dbReference type="STRING" id="4932.YOL091W"/>
<dbReference type="iPTMnet" id="Q12411"/>
<dbReference type="PaxDb" id="4932-YOL091W"/>
<dbReference type="PeptideAtlas" id="Q12411"/>
<dbReference type="EnsemblFungi" id="YOL091W_mRNA">
    <property type="protein sequence ID" value="YOL091W"/>
    <property type="gene ID" value="YOL091W"/>
</dbReference>
<dbReference type="GeneID" id="854062"/>
<dbReference type="KEGG" id="sce:YOL091W"/>
<dbReference type="AGR" id="SGD:S000005451"/>
<dbReference type="SGD" id="S000005451">
    <property type="gene designation" value="SPO21"/>
</dbReference>
<dbReference type="VEuPathDB" id="FungiDB:YOL091W"/>
<dbReference type="HOGENOM" id="CLU_532328_0_0_1"/>
<dbReference type="InParanoid" id="Q12411"/>
<dbReference type="OMA" id="SCISNHE"/>
<dbReference type="OrthoDB" id="4064247at2759"/>
<dbReference type="BioCyc" id="YEAST:G3O-33491-MONOMER"/>
<dbReference type="BioGRID-ORCS" id="854062">
    <property type="hits" value="0 hits in 10 CRISPR screens"/>
</dbReference>
<dbReference type="CD-CODE" id="876000F7">
    <property type="entry name" value="Centrosome"/>
</dbReference>
<dbReference type="PRO" id="PR:Q12411"/>
<dbReference type="Proteomes" id="UP000002311">
    <property type="component" value="Chromosome XV"/>
</dbReference>
<dbReference type="RNAct" id="Q12411">
    <property type="molecule type" value="protein"/>
</dbReference>
<dbReference type="GO" id="GO:0005737">
    <property type="term" value="C:cytoplasm"/>
    <property type="evidence" value="ECO:0007669"/>
    <property type="project" value="UniProtKB-KW"/>
</dbReference>
<dbReference type="GO" id="GO:0035974">
    <property type="term" value="C:meiotic spindle pole body"/>
    <property type="evidence" value="ECO:0000314"/>
    <property type="project" value="SGD"/>
</dbReference>
<dbReference type="GO" id="GO:0005628">
    <property type="term" value="C:prospore membrane"/>
    <property type="evidence" value="ECO:0007669"/>
    <property type="project" value="UniProtKB-SubCell"/>
</dbReference>
<dbReference type="GO" id="GO:0000922">
    <property type="term" value="C:spindle pole"/>
    <property type="evidence" value="ECO:0007669"/>
    <property type="project" value="UniProtKB-SubCell"/>
</dbReference>
<dbReference type="GO" id="GO:0005816">
    <property type="term" value="C:spindle pole body"/>
    <property type="evidence" value="ECO:0007005"/>
    <property type="project" value="SGD"/>
</dbReference>
<dbReference type="GO" id="GO:0005198">
    <property type="term" value="F:structural molecule activity"/>
    <property type="evidence" value="ECO:0000314"/>
    <property type="project" value="SGD"/>
</dbReference>
<dbReference type="GO" id="GO:0032120">
    <property type="term" value="P:ascospore-type prospore membrane formation"/>
    <property type="evidence" value="ECO:0000315"/>
    <property type="project" value="SGD"/>
</dbReference>
<dbReference type="GO" id="GO:0051301">
    <property type="term" value="P:cell division"/>
    <property type="evidence" value="ECO:0007669"/>
    <property type="project" value="UniProtKB-KW"/>
</dbReference>
<dbReference type="GO" id="GO:0051321">
    <property type="term" value="P:meiotic cell cycle"/>
    <property type="evidence" value="ECO:0000304"/>
    <property type="project" value="SGD"/>
</dbReference>
<evidence type="ECO:0000255" key="1"/>
<evidence type="ECO:0000256" key="2">
    <source>
        <dbReference type="SAM" id="MobiDB-lite"/>
    </source>
</evidence>
<evidence type="ECO:0000269" key="3">
    <source>
    </source>
</evidence>
<evidence type="ECO:0000269" key="4">
    <source>
    </source>
</evidence>
<evidence type="ECO:0000269" key="5">
    <source>
    </source>
</evidence>
<evidence type="ECO:0000269" key="6">
    <source>
    </source>
</evidence>
<evidence type="ECO:0000305" key="7"/>
<comment type="function">
    <text evidence="3 4">Involved in the pathway that organizes the shaping and sizing of the prospore membrane (PSM) during sporulation. May provide a meiosis-specific scaffold for the assembly of other proteins on spindle pole bodies (SPBs), and may be a limiting component for SPB formation.</text>
</comment>
<comment type="subunit">
    <text evidence="3 5 6">Interacts directly with MPC54, NUD1 and SPC42. Interacts with ADY3. Interacts with ADY4. Probable component of a SPB complex composed of ADY3, SSP1, DON1, MPC54, SPO21/MPC70, NUD1 and CNM67.</text>
</comment>
<comment type="interaction">
    <interactant intactId="EBI-36275">
        <id>Q12411</id>
    </interactant>
    <interactant intactId="EBI-33406">
        <id>Q07732</id>
        <label>ADY3</label>
    </interactant>
    <organismsDiffer>false</organismsDiffer>
    <experiments>5</experiments>
</comment>
<comment type="interaction">
    <interactant intactId="EBI-36275">
        <id>Q12411</id>
    </interactant>
    <interactant intactId="EBI-34513">
        <id>Q08550</id>
        <label>MPC54</label>
    </interactant>
    <organismsDiffer>false</organismsDiffer>
    <experiments>3</experiments>
</comment>
<comment type="interaction">
    <interactant intactId="EBI-36275">
        <id>Q12411</id>
    </interactant>
    <interactant intactId="EBI-12361">
        <id>P32336</id>
        <label>NUD1</label>
    </interactant>
    <organismsDiffer>false</organismsDiffer>
    <experiments>3</experiments>
</comment>
<comment type="subcellular location">
    <subcellularLocation>
        <location>Prospore membrane</location>
    </subcellularLocation>
    <subcellularLocation>
        <location>Cytoplasm</location>
        <location>Cytoskeleton</location>
        <location>Spindle pole</location>
    </subcellularLocation>
    <text>Localizes to the ends of spindle microtubules in cells in meiosis.</text>
</comment>
<comment type="developmental stage">
    <text evidence="3">Meiosis-specific. Expressed during meiosis II, from 3 to 9 hours after induction of sporulation. Not expressed during mitosis.</text>
</comment>
<comment type="similarity">
    <text evidence="7">Belongs to the MPC70 family.</text>
</comment>
<proteinExistence type="evidence at protein level"/>
<protein>
    <recommendedName>
        <fullName>Sporulation-specific protein 21</fullName>
    </recommendedName>
    <alternativeName>
        <fullName>Meiotic plaque component protein 70</fullName>
    </alternativeName>
</protein>
<sequence>MDNILKASNMEGTSTMTVTSRSSEDSSCISNHEQDTDTHKDGDTSGLENSKISKRKWMKEFFKLSKSPASKSSRSIGSMKSNQSLVSMKSSDDGNSYKNDYSSICGNSLPSAGLSRSNSVKELKLDSTGSQRSKNNVAMLARSSTTSQTTCSSSSSSSSYNSIKGNENDILLQNNNHFRHNKEIPQSKGSSNINTASIMSQYNVDTQATAIMSDMQKQYDSQQMTSPFVNEDLHFDPNGEVSHVIKAIFKEIGYKYDDFSDIPVFQLMQEMYQLVKKNSSARRTKITDYASKLKEKEAQLKSQNDKILKLETTNKAYKTKYKEVSLENKKIKEAFKELDNESYNHDEELLKKYKYTRETLDRVNREQQLIIDQNEFLKKSVNELQNEVNATNFKFSLFKEKYAKLADSITELNTSTKKREALGENLTFECNELKEICLKYKKNIENISNTNKNLQNSFKNERKKVLDLRNERNLLKKEILLIECHGSYSLLLVSNILTCYRFLLPSDTIIETESLIKELLNMNNSLSNHVSSSDEPPAEYSKRLELKCVEFEEKLLYFYQELVTKKIIDVIYKCFINYYKKSRQTDQKSNQNSSTPYKQSQRQVPHSIK</sequence>
<reference key="1">
    <citation type="journal article" date="1995" name="Yeast">
        <title>A 29.425 kb segment on the left arm of yeast chromosome XV contains more than twice as many unknown as known open reading frames.</title>
        <authorList>
            <person name="Zumstein E."/>
            <person name="Pearson B.M."/>
            <person name="Kalogeropoulos A."/>
            <person name="Schweizer M."/>
        </authorList>
    </citation>
    <scope>NUCLEOTIDE SEQUENCE [GENOMIC DNA]</scope>
    <source>
        <strain>ATCC 96604 / S288c / FY1679</strain>
    </source>
</reference>
<reference key="2">
    <citation type="journal article" date="1997" name="Nature">
        <title>The nucleotide sequence of Saccharomyces cerevisiae chromosome XV.</title>
        <authorList>
            <person name="Dujon B."/>
            <person name="Albermann K."/>
            <person name="Aldea M."/>
            <person name="Alexandraki D."/>
            <person name="Ansorge W."/>
            <person name="Arino J."/>
            <person name="Benes V."/>
            <person name="Bohn C."/>
            <person name="Bolotin-Fukuhara M."/>
            <person name="Bordonne R."/>
            <person name="Boyer J."/>
            <person name="Camasses A."/>
            <person name="Casamayor A."/>
            <person name="Casas C."/>
            <person name="Cheret G."/>
            <person name="Cziepluch C."/>
            <person name="Daignan-Fornier B."/>
            <person name="Dang V.-D."/>
            <person name="de Haan M."/>
            <person name="Delius H."/>
            <person name="Durand P."/>
            <person name="Fairhead C."/>
            <person name="Feldmann H."/>
            <person name="Gaillon L."/>
            <person name="Galisson F."/>
            <person name="Gamo F.-J."/>
            <person name="Gancedo C."/>
            <person name="Goffeau A."/>
            <person name="Goulding S.E."/>
            <person name="Grivell L.A."/>
            <person name="Habbig B."/>
            <person name="Hand N.J."/>
            <person name="Hani J."/>
            <person name="Hattenhorst U."/>
            <person name="Hebling U."/>
            <person name="Hernando Y."/>
            <person name="Herrero E."/>
            <person name="Heumann K."/>
            <person name="Hiesel R."/>
            <person name="Hilger F."/>
            <person name="Hofmann B."/>
            <person name="Hollenberg C.P."/>
            <person name="Hughes B."/>
            <person name="Jauniaux J.-C."/>
            <person name="Kalogeropoulos A."/>
            <person name="Katsoulou C."/>
            <person name="Kordes E."/>
            <person name="Lafuente M.J."/>
            <person name="Landt O."/>
            <person name="Louis E.J."/>
            <person name="Maarse A.C."/>
            <person name="Madania A."/>
            <person name="Mannhaupt G."/>
            <person name="Marck C."/>
            <person name="Martin R.P."/>
            <person name="Mewes H.-W."/>
            <person name="Michaux G."/>
            <person name="Paces V."/>
            <person name="Parle-McDermott A.G."/>
            <person name="Pearson B.M."/>
            <person name="Perrin A."/>
            <person name="Pettersson B."/>
            <person name="Poch O."/>
            <person name="Pohl T.M."/>
            <person name="Poirey R."/>
            <person name="Portetelle D."/>
            <person name="Pujol A."/>
            <person name="Purnelle B."/>
            <person name="Ramezani Rad M."/>
            <person name="Rechmann S."/>
            <person name="Schwager C."/>
            <person name="Schweizer M."/>
            <person name="Sor F."/>
            <person name="Sterky F."/>
            <person name="Tarassov I.A."/>
            <person name="Teodoru C."/>
            <person name="Tettelin H."/>
            <person name="Thierry A."/>
            <person name="Tobiasch E."/>
            <person name="Tzermia M."/>
            <person name="Uhlen M."/>
            <person name="Unseld M."/>
            <person name="Valens M."/>
            <person name="Vandenbol M."/>
            <person name="Vetter I."/>
            <person name="Vlcek C."/>
            <person name="Voet M."/>
            <person name="Volckaert G."/>
            <person name="Voss H."/>
            <person name="Wambutt R."/>
            <person name="Wedler H."/>
            <person name="Wiemann S."/>
            <person name="Winsor B."/>
            <person name="Wolfe K.H."/>
            <person name="Zollner A."/>
            <person name="Zumstein E."/>
            <person name="Kleine K."/>
        </authorList>
    </citation>
    <scope>NUCLEOTIDE SEQUENCE [LARGE SCALE GENOMIC DNA]</scope>
    <source>
        <strain>ATCC 204508 / S288c</strain>
    </source>
</reference>
<reference key="3">
    <citation type="journal article" date="2014" name="G3 (Bethesda)">
        <title>The reference genome sequence of Saccharomyces cerevisiae: Then and now.</title>
        <authorList>
            <person name="Engel S.R."/>
            <person name="Dietrich F.S."/>
            <person name="Fisk D.G."/>
            <person name="Binkley G."/>
            <person name="Balakrishnan R."/>
            <person name="Costanzo M.C."/>
            <person name="Dwight S.S."/>
            <person name="Hitz B.C."/>
            <person name="Karra K."/>
            <person name="Nash R.S."/>
            <person name="Weng S."/>
            <person name="Wong E.D."/>
            <person name="Lloyd P."/>
            <person name="Skrzypek M.S."/>
            <person name="Miyasato S.R."/>
            <person name="Simison M."/>
            <person name="Cherry J.M."/>
        </authorList>
    </citation>
    <scope>GENOME REANNOTATION</scope>
    <source>
        <strain>ATCC 204508 / S288c</strain>
    </source>
</reference>
<reference key="4">
    <citation type="journal article" date="2000" name="EMBO J.">
        <title>Role of the spindle pole body of yeast in mediating assembly of the prospore membrane during meiosis.</title>
        <authorList>
            <person name="Knop M."/>
            <person name="Strasser K."/>
        </authorList>
    </citation>
    <scope>FUNCTION</scope>
    <scope>SUBCELLULAR LOCATION</scope>
    <scope>DEVELOPMENTAL STAGE</scope>
    <scope>INTERACTION WITH MPC54; NUD1 AND SPC42</scope>
</reference>
<reference key="5">
    <citation type="journal article" date="2001" name="Mol. Biol. Cell">
        <title>SPO21 is required for meiosis-specific modification of the spindle pole body in yeast.</title>
        <authorList>
            <person name="Bajgier B.K."/>
            <person name="Malzone M."/>
            <person name="Nickas M."/>
            <person name="Neiman A.M."/>
        </authorList>
    </citation>
    <scope>FUNCTION</scope>
    <scope>SUBCELLULAR LOCATION</scope>
</reference>
<reference key="6">
    <citation type="journal article" date="2001" name="J. Bacteriol.">
        <title>Conservative duplication of spindle poles during meiosis in Saccharomyces cerevisiae.</title>
        <authorList>
            <person name="Wesp A."/>
            <person name="Prinz S."/>
            <person name="Fink G.R."/>
        </authorList>
    </citation>
    <scope>SUBCELLULAR LOCATION</scope>
</reference>
<reference key="7">
    <citation type="journal article" date="2002" name="Genetics">
        <title>Ady3p links spindle pole body function to spore wall synthesis in Saccharomyces cerevisiae.</title>
        <authorList>
            <person name="Nickas M.E."/>
            <person name="Neiman A.M."/>
        </authorList>
    </citation>
    <scope>INTERACTION WITH ADY3</scope>
</reference>
<reference key="8">
    <citation type="journal article" date="2003" name="Eukaryot. Cell">
        <title>Ady4p and Spo74p are components of the meiotic spindle pole body that promote growth of the prospore membrane in Saccharomyces cerevisiae.</title>
        <authorList>
            <person name="Nickas M.E."/>
            <person name="Schwartz C."/>
            <person name="Neiman A.M."/>
        </authorList>
    </citation>
    <scope>INTERACTION WITH ADY4</scope>
</reference>
<feature type="chain" id="PRO_0000096556" description="Sporulation-specific protein 21">
    <location>
        <begin position="1"/>
        <end position="609"/>
    </location>
</feature>
<feature type="region of interest" description="Disordered" evidence="2">
    <location>
        <begin position="1"/>
        <end position="50"/>
    </location>
</feature>
<feature type="region of interest" description="Disordered" evidence="2">
    <location>
        <begin position="68"/>
        <end position="96"/>
    </location>
</feature>
<feature type="region of interest" description="Disordered" evidence="2">
    <location>
        <begin position="124"/>
        <end position="165"/>
    </location>
</feature>
<feature type="region of interest" description="Disordered" evidence="2">
    <location>
        <begin position="586"/>
        <end position="609"/>
    </location>
</feature>
<feature type="coiled-coil region" evidence="1">
    <location>
        <begin position="283"/>
        <end position="342"/>
    </location>
</feature>
<feature type="coiled-coil region" evidence="1">
    <location>
        <begin position="357"/>
        <end position="393"/>
    </location>
</feature>
<feature type="coiled-coil region" evidence="1">
    <location>
        <begin position="424"/>
        <end position="483"/>
    </location>
</feature>
<feature type="compositionally biased region" description="Polar residues" evidence="2">
    <location>
        <begin position="10"/>
        <end position="31"/>
    </location>
</feature>
<feature type="compositionally biased region" description="Basic and acidic residues" evidence="2">
    <location>
        <begin position="32"/>
        <end position="43"/>
    </location>
</feature>
<feature type="compositionally biased region" description="Low complexity" evidence="2">
    <location>
        <begin position="68"/>
        <end position="81"/>
    </location>
</feature>
<feature type="compositionally biased region" description="Polar residues" evidence="2">
    <location>
        <begin position="82"/>
        <end position="96"/>
    </location>
</feature>
<feature type="compositionally biased region" description="Polar residues" evidence="2">
    <location>
        <begin position="127"/>
        <end position="136"/>
    </location>
</feature>
<feature type="compositionally biased region" description="Low complexity" evidence="2">
    <location>
        <begin position="143"/>
        <end position="159"/>
    </location>
</feature>
<feature type="compositionally biased region" description="Polar residues" evidence="2">
    <location>
        <begin position="587"/>
        <end position="609"/>
    </location>
</feature>
<gene>
    <name type="primary">SPO21</name>
    <name type="synonym">MPC70</name>
    <name type="ordered locus">YOL091W</name>
</gene>
<keyword id="KW-0131">Cell cycle</keyword>
<keyword id="KW-0132">Cell division</keyword>
<keyword id="KW-0175">Coiled coil</keyword>
<keyword id="KW-0963">Cytoplasm</keyword>
<keyword id="KW-0206">Cytoskeleton</keyword>
<keyword id="KW-0469">Meiosis</keyword>
<keyword id="KW-0472">Membrane</keyword>
<keyword id="KW-1185">Reference proteome</keyword>
<keyword id="KW-0749">Sporulation</keyword>